<feature type="chain" id="PRO_0000130342" description="Large ribosomal subunit protein uL29">
    <location>
        <begin position="1"/>
        <end position="63"/>
    </location>
</feature>
<protein>
    <recommendedName>
        <fullName evidence="1">Large ribosomal subunit protein uL29</fullName>
    </recommendedName>
    <alternativeName>
        <fullName>50S ribosomal protein L29</fullName>
    </alternativeName>
</protein>
<proteinExistence type="inferred from homology"/>
<organism>
    <name type="scientific">Aggregatibacter actinomycetemcomitans</name>
    <name type="common">Actinobacillus actinomycetemcomitans</name>
    <name type="synonym">Haemophilus actinomycetemcomitans</name>
    <dbReference type="NCBI Taxonomy" id="714"/>
    <lineage>
        <taxon>Bacteria</taxon>
        <taxon>Pseudomonadati</taxon>
        <taxon>Pseudomonadota</taxon>
        <taxon>Gammaproteobacteria</taxon>
        <taxon>Pasteurellales</taxon>
        <taxon>Pasteurellaceae</taxon>
        <taxon>Aggregatibacter</taxon>
    </lineage>
</organism>
<evidence type="ECO:0000305" key="1"/>
<comment type="similarity">
    <text evidence="1">Belongs to the universal ribosomal protein uL29 family.</text>
</comment>
<gene>
    <name type="primary">rpmC</name>
</gene>
<dbReference type="EMBL" id="D64071">
    <property type="protein sequence ID" value="BAA10955.1"/>
    <property type="molecule type" value="Genomic_DNA"/>
</dbReference>
<dbReference type="RefSeq" id="WP_005539356.1">
    <property type="nucleotide sequence ID" value="NZ_VSEW01000015.1"/>
</dbReference>
<dbReference type="SMR" id="P55840"/>
<dbReference type="STRING" id="714.ACT75_03720"/>
<dbReference type="GeneID" id="77210688"/>
<dbReference type="eggNOG" id="COG0255">
    <property type="taxonomic scope" value="Bacteria"/>
</dbReference>
<dbReference type="OMA" id="RFQMATS"/>
<dbReference type="OrthoDB" id="9815192at2"/>
<dbReference type="GO" id="GO:0022625">
    <property type="term" value="C:cytosolic large ribosomal subunit"/>
    <property type="evidence" value="ECO:0007669"/>
    <property type="project" value="TreeGrafter"/>
</dbReference>
<dbReference type="GO" id="GO:0003735">
    <property type="term" value="F:structural constituent of ribosome"/>
    <property type="evidence" value="ECO:0007669"/>
    <property type="project" value="InterPro"/>
</dbReference>
<dbReference type="GO" id="GO:0006412">
    <property type="term" value="P:translation"/>
    <property type="evidence" value="ECO:0007669"/>
    <property type="project" value="UniProtKB-UniRule"/>
</dbReference>
<dbReference type="CDD" id="cd00427">
    <property type="entry name" value="Ribosomal_L29_HIP"/>
    <property type="match status" value="1"/>
</dbReference>
<dbReference type="FunFam" id="1.10.287.310:FF:000001">
    <property type="entry name" value="50S ribosomal protein L29"/>
    <property type="match status" value="1"/>
</dbReference>
<dbReference type="Gene3D" id="1.10.287.310">
    <property type="match status" value="1"/>
</dbReference>
<dbReference type="HAMAP" id="MF_00374">
    <property type="entry name" value="Ribosomal_uL29"/>
    <property type="match status" value="1"/>
</dbReference>
<dbReference type="InterPro" id="IPR050063">
    <property type="entry name" value="Ribosomal_protein_uL29"/>
</dbReference>
<dbReference type="InterPro" id="IPR001854">
    <property type="entry name" value="Ribosomal_uL29"/>
</dbReference>
<dbReference type="InterPro" id="IPR018254">
    <property type="entry name" value="Ribosomal_uL29_CS"/>
</dbReference>
<dbReference type="InterPro" id="IPR036049">
    <property type="entry name" value="Ribosomal_uL29_sf"/>
</dbReference>
<dbReference type="NCBIfam" id="TIGR00012">
    <property type="entry name" value="L29"/>
    <property type="match status" value="1"/>
</dbReference>
<dbReference type="PANTHER" id="PTHR10916">
    <property type="entry name" value="60S RIBOSOMAL PROTEIN L35/50S RIBOSOMAL PROTEIN L29"/>
    <property type="match status" value="1"/>
</dbReference>
<dbReference type="PANTHER" id="PTHR10916:SF0">
    <property type="entry name" value="LARGE RIBOSOMAL SUBUNIT PROTEIN UL29C"/>
    <property type="match status" value="1"/>
</dbReference>
<dbReference type="Pfam" id="PF00831">
    <property type="entry name" value="Ribosomal_L29"/>
    <property type="match status" value="1"/>
</dbReference>
<dbReference type="SUPFAM" id="SSF46561">
    <property type="entry name" value="Ribosomal protein L29 (L29p)"/>
    <property type="match status" value="1"/>
</dbReference>
<dbReference type="PROSITE" id="PS00579">
    <property type="entry name" value="RIBOSOMAL_L29"/>
    <property type="match status" value="1"/>
</dbReference>
<sequence>MKAQELRTKSVEELNAELVNLLGEQFKLRMQAATGQLQQTHQLKQVRRSIAQIKTVLTEKAGE</sequence>
<accession>P55840</accession>
<name>RL29_AGGAC</name>
<reference key="1">
    <citation type="journal article" date="1996" name="Microbiology">
        <title>Molecular analysis of a new insertion sequence from Actinobacillus (Haemophilus) actinomycetemcomitans FDC Y4.</title>
        <authorList>
            <person name="Hayashida H."/>
            <person name="Hotokezaka H."/>
            <person name="Ohara N."/>
            <person name="Kimura M."/>
            <person name="Takagi O."/>
            <person name="Yamada T."/>
        </authorList>
    </citation>
    <scope>NUCLEOTIDE SEQUENCE [GENOMIC DNA]</scope>
    <source>
        <strain>ATCC 43718 / FDC Y4 / Serotype b</strain>
    </source>
</reference>
<keyword id="KW-0687">Ribonucleoprotein</keyword>
<keyword id="KW-0689">Ribosomal protein</keyword>